<organism>
    <name type="scientific">Xylella fastidiosa (strain Temecula1 / ATCC 700964)</name>
    <dbReference type="NCBI Taxonomy" id="183190"/>
    <lineage>
        <taxon>Bacteria</taxon>
        <taxon>Pseudomonadati</taxon>
        <taxon>Pseudomonadota</taxon>
        <taxon>Gammaproteobacteria</taxon>
        <taxon>Lysobacterales</taxon>
        <taxon>Lysobacteraceae</taxon>
        <taxon>Xylella</taxon>
    </lineage>
</organism>
<feature type="chain" id="PRO_0000102386" description="Lipoyl synthase">
    <location>
        <begin position="1"/>
        <end position="373"/>
    </location>
</feature>
<feature type="domain" description="Radical SAM core" evidence="2">
    <location>
        <begin position="93"/>
        <end position="312"/>
    </location>
</feature>
<feature type="region of interest" description="Disordered" evidence="3">
    <location>
        <begin position="14"/>
        <end position="36"/>
    </location>
</feature>
<feature type="region of interest" description="Disordered" evidence="3">
    <location>
        <begin position="346"/>
        <end position="373"/>
    </location>
</feature>
<feature type="compositionally biased region" description="Polar residues" evidence="3">
    <location>
        <begin position="358"/>
        <end position="367"/>
    </location>
</feature>
<feature type="binding site" evidence="1">
    <location>
        <position position="81"/>
    </location>
    <ligand>
        <name>[4Fe-4S] cluster</name>
        <dbReference type="ChEBI" id="CHEBI:49883"/>
        <label>1</label>
    </ligand>
</feature>
<feature type="binding site" evidence="1">
    <location>
        <position position="86"/>
    </location>
    <ligand>
        <name>[4Fe-4S] cluster</name>
        <dbReference type="ChEBI" id="CHEBI:49883"/>
        <label>1</label>
    </ligand>
</feature>
<feature type="binding site" evidence="1">
    <location>
        <position position="92"/>
    </location>
    <ligand>
        <name>[4Fe-4S] cluster</name>
        <dbReference type="ChEBI" id="CHEBI:49883"/>
        <label>1</label>
    </ligand>
</feature>
<feature type="binding site" evidence="1">
    <location>
        <position position="107"/>
    </location>
    <ligand>
        <name>[4Fe-4S] cluster</name>
        <dbReference type="ChEBI" id="CHEBI:49883"/>
        <label>2</label>
        <note>4Fe-4S-S-AdoMet</note>
    </ligand>
</feature>
<feature type="binding site" evidence="1">
    <location>
        <position position="111"/>
    </location>
    <ligand>
        <name>[4Fe-4S] cluster</name>
        <dbReference type="ChEBI" id="CHEBI:49883"/>
        <label>2</label>
        <note>4Fe-4S-S-AdoMet</note>
    </ligand>
</feature>
<feature type="binding site" evidence="1">
    <location>
        <position position="114"/>
    </location>
    <ligand>
        <name>[4Fe-4S] cluster</name>
        <dbReference type="ChEBI" id="CHEBI:49883"/>
        <label>2</label>
        <note>4Fe-4S-S-AdoMet</note>
    </ligand>
</feature>
<feature type="binding site" evidence="1">
    <location>
        <position position="323"/>
    </location>
    <ligand>
        <name>[4Fe-4S] cluster</name>
        <dbReference type="ChEBI" id="CHEBI:49883"/>
        <label>1</label>
    </ligand>
</feature>
<keyword id="KW-0004">4Fe-4S</keyword>
<keyword id="KW-0963">Cytoplasm</keyword>
<keyword id="KW-0408">Iron</keyword>
<keyword id="KW-0411">Iron-sulfur</keyword>
<keyword id="KW-0479">Metal-binding</keyword>
<keyword id="KW-1185">Reference proteome</keyword>
<keyword id="KW-0949">S-adenosyl-L-methionine</keyword>
<keyword id="KW-0808">Transferase</keyword>
<name>LIPA_XYLFT</name>
<protein>
    <recommendedName>
        <fullName evidence="1">Lipoyl synthase</fullName>
        <ecNumber evidence="1">2.8.1.8</ecNumber>
    </recommendedName>
    <alternativeName>
        <fullName evidence="1">Lip-syn</fullName>
        <shortName evidence="1">LS</shortName>
    </alternativeName>
    <alternativeName>
        <fullName evidence="1">Lipoate synthase</fullName>
    </alternativeName>
    <alternativeName>
        <fullName evidence="1">Lipoic acid synthase</fullName>
    </alternativeName>
    <alternativeName>
        <fullName evidence="1">Sulfur insertion protein LipA</fullName>
    </alternativeName>
</protein>
<proteinExistence type="inferred from homology"/>
<sequence length="373" mass="41126">MTQPIIRSIPLHVVSNDHPSSSPLQPGVKQSGEDKIGRSPVQFADVPVLRKPSWIRVRIPSGNAVQSLKAKLRENRLVTVCEEAACPNIHECFSHGTATFMILGEVCTRRCSFCDVAHGRPKPPDPEEPISLARTVAEMGLKYVVVTSVDRDDLRDGGAQHFVDCIAAIRQSAPQTRIEILTPDFRGKGRMDRALDILAACPPDVFNHNVETVPALYPNVRPGADYQWSLTLLKRFKAQHPQVPTKSGIMLGLGETLDQVQATLRDLRAHDVDMVTVGQYLQPTPHHHPVLRYWTPDEYKALEEYGMALGFSHVASGPMVRSSYHADHQAKEAGLGFNATVSLGSPAVSSTEHRERNTIASKSASKTESIHHR</sequence>
<dbReference type="EC" id="2.8.1.8" evidence="1"/>
<dbReference type="EMBL" id="AE009442">
    <property type="protein sequence ID" value="AAO28403.1"/>
    <property type="molecule type" value="Genomic_DNA"/>
</dbReference>
<dbReference type="RefSeq" id="WP_004090539.1">
    <property type="nucleotide sequence ID" value="NC_004556.1"/>
</dbReference>
<dbReference type="SMR" id="Q87DZ9"/>
<dbReference type="GeneID" id="93904240"/>
<dbReference type="KEGG" id="xft:PD_0530"/>
<dbReference type="HOGENOM" id="CLU_033144_2_1_6"/>
<dbReference type="UniPathway" id="UPA00538">
    <property type="reaction ID" value="UER00593"/>
</dbReference>
<dbReference type="Proteomes" id="UP000002516">
    <property type="component" value="Chromosome"/>
</dbReference>
<dbReference type="GO" id="GO:0005737">
    <property type="term" value="C:cytoplasm"/>
    <property type="evidence" value="ECO:0007669"/>
    <property type="project" value="UniProtKB-SubCell"/>
</dbReference>
<dbReference type="GO" id="GO:0051539">
    <property type="term" value="F:4 iron, 4 sulfur cluster binding"/>
    <property type="evidence" value="ECO:0007669"/>
    <property type="project" value="UniProtKB-UniRule"/>
</dbReference>
<dbReference type="GO" id="GO:0016992">
    <property type="term" value="F:lipoate synthase activity"/>
    <property type="evidence" value="ECO:0007669"/>
    <property type="project" value="UniProtKB-UniRule"/>
</dbReference>
<dbReference type="GO" id="GO:0046872">
    <property type="term" value="F:metal ion binding"/>
    <property type="evidence" value="ECO:0007669"/>
    <property type="project" value="UniProtKB-KW"/>
</dbReference>
<dbReference type="CDD" id="cd01335">
    <property type="entry name" value="Radical_SAM"/>
    <property type="match status" value="1"/>
</dbReference>
<dbReference type="FunFam" id="3.20.20.70:FF:000023">
    <property type="entry name" value="Lipoyl synthase"/>
    <property type="match status" value="1"/>
</dbReference>
<dbReference type="Gene3D" id="3.20.20.70">
    <property type="entry name" value="Aldolase class I"/>
    <property type="match status" value="1"/>
</dbReference>
<dbReference type="HAMAP" id="MF_00206">
    <property type="entry name" value="Lipoyl_synth"/>
    <property type="match status" value="1"/>
</dbReference>
<dbReference type="InterPro" id="IPR013785">
    <property type="entry name" value="Aldolase_TIM"/>
</dbReference>
<dbReference type="InterPro" id="IPR006638">
    <property type="entry name" value="Elp3/MiaA/NifB-like_rSAM"/>
</dbReference>
<dbReference type="InterPro" id="IPR031691">
    <property type="entry name" value="LIAS_N"/>
</dbReference>
<dbReference type="InterPro" id="IPR003698">
    <property type="entry name" value="Lipoyl_synth"/>
</dbReference>
<dbReference type="InterPro" id="IPR007197">
    <property type="entry name" value="rSAM"/>
</dbReference>
<dbReference type="NCBIfam" id="TIGR00510">
    <property type="entry name" value="lipA"/>
    <property type="match status" value="1"/>
</dbReference>
<dbReference type="NCBIfam" id="NF004019">
    <property type="entry name" value="PRK05481.1"/>
    <property type="match status" value="1"/>
</dbReference>
<dbReference type="NCBIfam" id="NF009544">
    <property type="entry name" value="PRK12928.1"/>
    <property type="match status" value="1"/>
</dbReference>
<dbReference type="PANTHER" id="PTHR10949">
    <property type="entry name" value="LIPOYL SYNTHASE"/>
    <property type="match status" value="1"/>
</dbReference>
<dbReference type="PANTHER" id="PTHR10949:SF0">
    <property type="entry name" value="LIPOYL SYNTHASE, MITOCHONDRIAL"/>
    <property type="match status" value="1"/>
</dbReference>
<dbReference type="Pfam" id="PF16881">
    <property type="entry name" value="LIAS_N"/>
    <property type="match status" value="1"/>
</dbReference>
<dbReference type="Pfam" id="PF04055">
    <property type="entry name" value="Radical_SAM"/>
    <property type="match status" value="1"/>
</dbReference>
<dbReference type="PIRSF" id="PIRSF005963">
    <property type="entry name" value="Lipoyl_synth"/>
    <property type="match status" value="1"/>
</dbReference>
<dbReference type="SFLD" id="SFLDF00271">
    <property type="entry name" value="lipoyl_synthase"/>
    <property type="match status" value="1"/>
</dbReference>
<dbReference type="SFLD" id="SFLDG01058">
    <property type="entry name" value="lipoyl_synthase_like"/>
    <property type="match status" value="1"/>
</dbReference>
<dbReference type="SMART" id="SM00729">
    <property type="entry name" value="Elp3"/>
    <property type="match status" value="1"/>
</dbReference>
<dbReference type="SUPFAM" id="SSF102114">
    <property type="entry name" value="Radical SAM enzymes"/>
    <property type="match status" value="1"/>
</dbReference>
<dbReference type="PROSITE" id="PS51918">
    <property type="entry name" value="RADICAL_SAM"/>
    <property type="match status" value="1"/>
</dbReference>
<evidence type="ECO:0000255" key="1">
    <source>
        <dbReference type="HAMAP-Rule" id="MF_00206"/>
    </source>
</evidence>
<evidence type="ECO:0000255" key="2">
    <source>
        <dbReference type="PROSITE-ProRule" id="PRU01266"/>
    </source>
</evidence>
<evidence type="ECO:0000256" key="3">
    <source>
        <dbReference type="SAM" id="MobiDB-lite"/>
    </source>
</evidence>
<gene>
    <name evidence="1" type="primary">lipA</name>
    <name type="ordered locus">PD_0530</name>
</gene>
<reference key="1">
    <citation type="journal article" date="2003" name="J. Bacteriol.">
        <title>Comparative analyses of the complete genome sequences of Pierce's disease and citrus variegated chlorosis strains of Xylella fastidiosa.</title>
        <authorList>
            <person name="Van Sluys M.A."/>
            <person name="de Oliveira M.C."/>
            <person name="Monteiro-Vitorello C.B."/>
            <person name="Miyaki C.Y."/>
            <person name="Furlan L.R."/>
            <person name="Camargo L.E.A."/>
            <person name="da Silva A.C.R."/>
            <person name="Moon D.H."/>
            <person name="Takita M.A."/>
            <person name="Lemos E.G.M."/>
            <person name="Machado M.A."/>
            <person name="Ferro M.I.T."/>
            <person name="da Silva F.R."/>
            <person name="Goldman M.H.S."/>
            <person name="Goldman G.H."/>
            <person name="Lemos M.V.F."/>
            <person name="El-Dorry H."/>
            <person name="Tsai S.M."/>
            <person name="Carrer H."/>
            <person name="Carraro D.M."/>
            <person name="de Oliveira R.C."/>
            <person name="Nunes L.R."/>
            <person name="Siqueira W.J."/>
            <person name="Coutinho L.L."/>
            <person name="Kimura E.T."/>
            <person name="Ferro E.S."/>
            <person name="Harakava R."/>
            <person name="Kuramae E.E."/>
            <person name="Marino C.L."/>
            <person name="Giglioti E."/>
            <person name="Abreu I.L."/>
            <person name="Alves L.M.C."/>
            <person name="do Amaral A.M."/>
            <person name="Baia G.S."/>
            <person name="Blanco S.R."/>
            <person name="Brito M.S."/>
            <person name="Cannavan F.S."/>
            <person name="Celestino A.V."/>
            <person name="da Cunha A.F."/>
            <person name="Fenille R.C."/>
            <person name="Ferro J.A."/>
            <person name="Formighieri E.F."/>
            <person name="Kishi L.T."/>
            <person name="Leoni S.G."/>
            <person name="Oliveira A.R."/>
            <person name="Rosa V.E. Jr."/>
            <person name="Sassaki F.T."/>
            <person name="Sena J.A.D."/>
            <person name="de Souza A.A."/>
            <person name="Truffi D."/>
            <person name="Tsukumo F."/>
            <person name="Yanai G.M."/>
            <person name="Zaros L.G."/>
            <person name="Civerolo E.L."/>
            <person name="Simpson A.J.G."/>
            <person name="Almeida N.F. Jr."/>
            <person name="Setubal J.C."/>
            <person name="Kitajima J.P."/>
        </authorList>
    </citation>
    <scope>NUCLEOTIDE SEQUENCE [LARGE SCALE GENOMIC DNA]</scope>
    <source>
        <strain>Temecula1 / ATCC 700964</strain>
    </source>
</reference>
<accession>Q87DZ9</accession>
<comment type="function">
    <text evidence="1">Catalyzes the radical-mediated insertion of two sulfur atoms into the C-6 and C-8 positions of the octanoyl moiety bound to the lipoyl domains of lipoate-dependent enzymes, thereby converting the octanoylated domains into lipoylated derivatives.</text>
</comment>
<comment type="catalytic activity">
    <reaction evidence="1">
        <text>[[Fe-S] cluster scaffold protein carrying a second [4Fe-4S](2+) cluster] + N(6)-octanoyl-L-lysyl-[protein] + 2 oxidized [2Fe-2S]-[ferredoxin] + 2 S-adenosyl-L-methionine + 4 H(+) = [[Fe-S] cluster scaffold protein] + N(6)-[(R)-dihydrolipoyl]-L-lysyl-[protein] + 4 Fe(3+) + 2 hydrogen sulfide + 2 5'-deoxyadenosine + 2 L-methionine + 2 reduced [2Fe-2S]-[ferredoxin]</text>
        <dbReference type="Rhea" id="RHEA:16585"/>
        <dbReference type="Rhea" id="RHEA-COMP:9928"/>
        <dbReference type="Rhea" id="RHEA-COMP:10000"/>
        <dbReference type="Rhea" id="RHEA-COMP:10001"/>
        <dbReference type="Rhea" id="RHEA-COMP:10475"/>
        <dbReference type="Rhea" id="RHEA-COMP:14568"/>
        <dbReference type="Rhea" id="RHEA-COMP:14569"/>
        <dbReference type="ChEBI" id="CHEBI:15378"/>
        <dbReference type="ChEBI" id="CHEBI:17319"/>
        <dbReference type="ChEBI" id="CHEBI:29034"/>
        <dbReference type="ChEBI" id="CHEBI:29919"/>
        <dbReference type="ChEBI" id="CHEBI:33722"/>
        <dbReference type="ChEBI" id="CHEBI:33737"/>
        <dbReference type="ChEBI" id="CHEBI:33738"/>
        <dbReference type="ChEBI" id="CHEBI:57844"/>
        <dbReference type="ChEBI" id="CHEBI:59789"/>
        <dbReference type="ChEBI" id="CHEBI:78809"/>
        <dbReference type="ChEBI" id="CHEBI:83100"/>
        <dbReference type="EC" id="2.8.1.8"/>
    </reaction>
</comment>
<comment type="cofactor">
    <cofactor evidence="1">
        <name>[4Fe-4S] cluster</name>
        <dbReference type="ChEBI" id="CHEBI:49883"/>
    </cofactor>
    <text evidence="1">Binds 2 [4Fe-4S] clusters per subunit. One cluster is coordinated with 3 cysteines and an exchangeable S-adenosyl-L-methionine.</text>
</comment>
<comment type="pathway">
    <text evidence="1">Protein modification; protein lipoylation via endogenous pathway; protein N(6)-(lipoyl)lysine from octanoyl-[acyl-carrier-protein]: step 2/2.</text>
</comment>
<comment type="subcellular location">
    <subcellularLocation>
        <location evidence="1">Cytoplasm</location>
    </subcellularLocation>
</comment>
<comment type="similarity">
    <text evidence="1">Belongs to the radical SAM superfamily. Lipoyl synthase family.</text>
</comment>